<name>XYLA_ACTP2</name>
<protein>
    <recommendedName>
        <fullName evidence="1">Xylose isomerase</fullName>
        <ecNumber evidence="1">5.3.1.5</ecNumber>
    </recommendedName>
</protein>
<keyword id="KW-0119">Carbohydrate metabolism</keyword>
<keyword id="KW-0963">Cytoplasm</keyword>
<keyword id="KW-0413">Isomerase</keyword>
<keyword id="KW-0460">Magnesium</keyword>
<keyword id="KW-0479">Metal-binding</keyword>
<keyword id="KW-1185">Reference proteome</keyword>
<keyword id="KW-0859">Xylose metabolism</keyword>
<evidence type="ECO:0000255" key="1">
    <source>
        <dbReference type="HAMAP-Rule" id="MF_00455"/>
    </source>
</evidence>
<sequence length="439" mass="49636">MSNYFDKIEKVKYEGADSTNPFAFKHYNPNEVILGKTMAEHLRLAVCYWHTFCWTGNDMFGVGSLDRSWQKTGDLLEGAKQKAEIAFEFFQKLGIPYYCFHDVDIAPEGNSYKEYVHNFHTMVDILEKKQAETGVKLLWGTANCFTNPRYMSGASTNPNPEVFSWAASQVFNAMNATKRLGGENYVLWGGREGYETLLNTDLKREREQIGRFMQMVVEHKHKIGFNGTLLIEPKPQEPTKHQYDYDVATVYGFLKQFGLEKEIKVNIEANHATLAGHTFQHEIATAAALDIFGSIDANRGDPQLGWDTDQFPNSVEENTLVMYEILKAGGFTTGGFNFDAKIRRQSTDPYDLFHGHIGAIDVLALSLKRAAKMIEDKTLQGIVDQRYAGWNGDLGQQILAGKASLEDLAKIVESKALDPKPVSGQQEYLENLVNNYIYR</sequence>
<proteinExistence type="inferred from homology"/>
<accession>A3N3K2</accession>
<dbReference type="EC" id="5.3.1.5" evidence="1"/>
<dbReference type="EMBL" id="CP000569">
    <property type="protein sequence ID" value="ABN74988.1"/>
    <property type="molecule type" value="Genomic_DNA"/>
</dbReference>
<dbReference type="RefSeq" id="WP_005599638.1">
    <property type="nucleotide sequence ID" value="NC_009053.1"/>
</dbReference>
<dbReference type="SMR" id="A3N3K2"/>
<dbReference type="STRING" id="416269.APL_1908"/>
<dbReference type="EnsemblBacteria" id="ABN74988">
    <property type="protein sequence ID" value="ABN74988"/>
    <property type="gene ID" value="APL_1908"/>
</dbReference>
<dbReference type="GeneID" id="48600213"/>
<dbReference type="KEGG" id="apl:APL_1908"/>
<dbReference type="eggNOG" id="COG2115">
    <property type="taxonomic scope" value="Bacteria"/>
</dbReference>
<dbReference type="HOGENOM" id="CLU_037261_1_0_6"/>
<dbReference type="Proteomes" id="UP000001432">
    <property type="component" value="Chromosome"/>
</dbReference>
<dbReference type="GO" id="GO:0005737">
    <property type="term" value="C:cytoplasm"/>
    <property type="evidence" value="ECO:0007669"/>
    <property type="project" value="UniProtKB-SubCell"/>
</dbReference>
<dbReference type="GO" id="GO:0000287">
    <property type="term" value="F:magnesium ion binding"/>
    <property type="evidence" value="ECO:0007669"/>
    <property type="project" value="UniProtKB-UniRule"/>
</dbReference>
<dbReference type="GO" id="GO:0009045">
    <property type="term" value="F:xylose isomerase activity"/>
    <property type="evidence" value="ECO:0007669"/>
    <property type="project" value="UniProtKB-UniRule"/>
</dbReference>
<dbReference type="GO" id="GO:0042732">
    <property type="term" value="P:D-xylose metabolic process"/>
    <property type="evidence" value="ECO:0007669"/>
    <property type="project" value="UniProtKB-UniRule"/>
</dbReference>
<dbReference type="FunFam" id="3.20.20.150:FF:000002">
    <property type="entry name" value="Xylose isomerase"/>
    <property type="match status" value="1"/>
</dbReference>
<dbReference type="Gene3D" id="3.20.20.150">
    <property type="entry name" value="Divalent-metal-dependent TIM barrel enzymes"/>
    <property type="match status" value="1"/>
</dbReference>
<dbReference type="HAMAP" id="MF_00455">
    <property type="entry name" value="Xylose_isom_A"/>
    <property type="match status" value="1"/>
</dbReference>
<dbReference type="InterPro" id="IPR036237">
    <property type="entry name" value="Xyl_isomerase-like_sf"/>
</dbReference>
<dbReference type="InterPro" id="IPR013452">
    <property type="entry name" value="Xylose_isom_bac"/>
</dbReference>
<dbReference type="InterPro" id="IPR001998">
    <property type="entry name" value="Xylose_isomerase"/>
</dbReference>
<dbReference type="NCBIfam" id="NF003998">
    <property type="entry name" value="PRK05474.1"/>
    <property type="match status" value="1"/>
</dbReference>
<dbReference type="NCBIfam" id="TIGR02630">
    <property type="entry name" value="xylose_isom_A"/>
    <property type="match status" value="1"/>
</dbReference>
<dbReference type="PANTHER" id="PTHR48408">
    <property type="match status" value="1"/>
</dbReference>
<dbReference type="PANTHER" id="PTHR48408:SF1">
    <property type="entry name" value="XYLOSE ISOMERASE"/>
    <property type="match status" value="1"/>
</dbReference>
<dbReference type="PRINTS" id="PR00688">
    <property type="entry name" value="XYLOSISMRASE"/>
</dbReference>
<dbReference type="SUPFAM" id="SSF51658">
    <property type="entry name" value="Xylose isomerase-like"/>
    <property type="match status" value="1"/>
</dbReference>
<dbReference type="PROSITE" id="PS51415">
    <property type="entry name" value="XYLOSE_ISOMERASE"/>
    <property type="match status" value="1"/>
</dbReference>
<reference key="1">
    <citation type="journal article" date="2008" name="J. Bacteriol.">
        <title>The complete genome sequence of Actinobacillus pleuropneumoniae L20 (serotype 5b).</title>
        <authorList>
            <person name="Foote S.J."/>
            <person name="Bosse J.T."/>
            <person name="Bouevitch A.B."/>
            <person name="Langford P.R."/>
            <person name="Young N.M."/>
            <person name="Nash J.H.E."/>
        </authorList>
    </citation>
    <scope>NUCLEOTIDE SEQUENCE [LARGE SCALE GENOMIC DNA]</scope>
    <source>
        <strain>L20</strain>
    </source>
</reference>
<comment type="catalytic activity">
    <reaction evidence="1">
        <text>alpha-D-xylose = alpha-D-xylulofuranose</text>
        <dbReference type="Rhea" id="RHEA:22816"/>
        <dbReference type="ChEBI" id="CHEBI:28518"/>
        <dbReference type="ChEBI" id="CHEBI:188998"/>
        <dbReference type="EC" id="5.3.1.5"/>
    </reaction>
</comment>
<comment type="cofactor">
    <cofactor evidence="1">
        <name>Mg(2+)</name>
        <dbReference type="ChEBI" id="CHEBI:18420"/>
    </cofactor>
    <text evidence="1">Binds 2 magnesium ions per subunit.</text>
</comment>
<comment type="subunit">
    <text evidence="1">Homotetramer.</text>
</comment>
<comment type="subcellular location">
    <subcellularLocation>
        <location evidence="1">Cytoplasm</location>
    </subcellularLocation>
</comment>
<comment type="similarity">
    <text evidence="1">Belongs to the xylose isomerase family.</text>
</comment>
<feature type="chain" id="PRO_1000026427" description="Xylose isomerase">
    <location>
        <begin position="1"/>
        <end position="439"/>
    </location>
</feature>
<feature type="active site" evidence="1">
    <location>
        <position position="101"/>
    </location>
</feature>
<feature type="active site" evidence="1">
    <location>
        <position position="104"/>
    </location>
</feature>
<feature type="binding site" evidence="1">
    <location>
        <position position="232"/>
    </location>
    <ligand>
        <name>Mg(2+)</name>
        <dbReference type="ChEBI" id="CHEBI:18420"/>
        <label>1</label>
    </ligand>
</feature>
<feature type="binding site" evidence="1">
    <location>
        <position position="268"/>
    </location>
    <ligand>
        <name>Mg(2+)</name>
        <dbReference type="ChEBI" id="CHEBI:18420"/>
        <label>1</label>
    </ligand>
</feature>
<feature type="binding site" evidence="1">
    <location>
        <position position="268"/>
    </location>
    <ligand>
        <name>Mg(2+)</name>
        <dbReference type="ChEBI" id="CHEBI:18420"/>
        <label>2</label>
    </ligand>
</feature>
<feature type="binding site" evidence="1">
    <location>
        <position position="271"/>
    </location>
    <ligand>
        <name>Mg(2+)</name>
        <dbReference type="ChEBI" id="CHEBI:18420"/>
        <label>2</label>
    </ligand>
</feature>
<feature type="binding site" evidence="1">
    <location>
        <position position="296"/>
    </location>
    <ligand>
        <name>Mg(2+)</name>
        <dbReference type="ChEBI" id="CHEBI:18420"/>
        <label>1</label>
    </ligand>
</feature>
<feature type="binding site" evidence="1">
    <location>
        <position position="307"/>
    </location>
    <ligand>
        <name>Mg(2+)</name>
        <dbReference type="ChEBI" id="CHEBI:18420"/>
        <label>2</label>
    </ligand>
</feature>
<feature type="binding site" evidence="1">
    <location>
        <position position="309"/>
    </location>
    <ligand>
        <name>Mg(2+)</name>
        <dbReference type="ChEBI" id="CHEBI:18420"/>
        <label>2</label>
    </ligand>
</feature>
<feature type="binding site" evidence="1">
    <location>
        <position position="339"/>
    </location>
    <ligand>
        <name>Mg(2+)</name>
        <dbReference type="ChEBI" id="CHEBI:18420"/>
        <label>1</label>
    </ligand>
</feature>
<gene>
    <name evidence="1" type="primary">xylA</name>
    <name type="ordered locus">APL_1908</name>
</gene>
<organism>
    <name type="scientific">Actinobacillus pleuropneumoniae serotype 5b (strain L20)</name>
    <dbReference type="NCBI Taxonomy" id="416269"/>
    <lineage>
        <taxon>Bacteria</taxon>
        <taxon>Pseudomonadati</taxon>
        <taxon>Pseudomonadota</taxon>
        <taxon>Gammaproteobacteria</taxon>
        <taxon>Pasteurellales</taxon>
        <taxon>Pasteurellaceae</taxon>
        <taxon>Actinobacillus</taxon>
    </lineage>
</organism>